<protein>
    <recommendedName>
        <fullName evidence="1">Protein Ves</fullName>
    </recommendedName>
</protein>
<organism>
    <name type="scientific">Escherichia coli (strain SE11)</name>
    <dbReference type="NCBI Taxonomy" id="409438"/>
    <lineage>
        <taxon>Bacteria</taxon>
        <taxon>Pseudomonadati</taxon>
        <taxon>Pseudomonadota</taxon>
        <taxon>Gammaproteobacteria</taxon>
        <taxon>Enterobacterales</taxon>
        <taxon>Enterobacteriaceae</taxon>
        <taxon>Escherichia</taxon>
    </lineage>
</organism>
<evidence type="ECO:0000255" key="1">
    <source>
        <dbReference type="HAMAP-Rule" id="MF_01591"/>
    </source>
</evidence>
<evidence type="ECO:0000305" key="2"/>
<reference key="1">
    <citation type="journal article" date="2008" name="DNA Res.">
        <title>Complete genome sequence and comparative analysis of the wild-type commensal Escherichia coli strain SE11 isolated from a healthy adult.</title>
        <authorList>
            <person name="Oshima K."/>
            <person name="Toh H."/>
            <person name="Ogura Y."/>
            <person name="Sasamoto H."/>
            <person name="Morita H."/>
            <person name="Park S.-H."/>
            <person name="Ooka T."/>
            <person name="Iyoda S."/>
            <person name="Taylor T.D."/>
            <person name="Hayashi T."/>
            <person name="Itoh K."/>
            <person name="Hattori M."/>
        </authorList>
    </citation>
    <scope>NUCLEOTIDE SEQUENCE [LARGE SCALE GENOMIC DNA]</scope>
    <source>
        <strain>SE11</strain>
    </source>
</reference>
<feature type="chain" id="PRO_0000381770" description="Protein Ves">
    <location>
        <begin position="1"/>
        <end position="191"/>
    </location>
</feature>
<name>VES_ECOSE</name>
<dbReference type="EMBL" id="AP009240">
    <property type="protein sequence ID" value="BAG77436.1"/>
    <property type="status" value="ALT_INIT"/>
    <property type="molecule type" value="Genomic_DNA"/>
</dbReference>
<dbReference type="RefSeq" id="WP_000455601.1">
    <property type="nucleotide sequence ID" value="NC_011415.1"/>
</dbReference>
<dbReference type="SMR" id="B6IBG2"/>
<dbReference type="KEGG" id="ecy:ECSE_1912"/>
<dbReference type="HOGENOM" id="CLU_090931_5_0_6"/>
<dbReference type="Proteomes" id="UP000008199">
    <property type="component" value="Chromosome"/>
</dbReference>
<dbReference type="CDD" id="cd20293">
    <property type="entry name" value="cupin_HutD_N"/>
    <property type="match status" value="1"/>
</dbReference>
<dbReference type="Gene3D" id="2.60.120.10">
    <property type="entry name" value="Jelly Rolls"/>
    <property type="match status" value="1"/>
</dbReference>
<dbReference type="HAMAP" id="MF_01591">
    <property type="entry name" value="Ves"/>
    <property type="match status" value="1"/>
</dbReference>
<dbReference type="InterPro" id="IPR014710">
    <property type="entry name" value="RmlC-like_jellyroll"/>
</dbReference>
<dbReference type="InterPro" id="IPR011051">
    <property type="entry name" value="RmlC_Cupin_sf"/>
</dbReference>
<dbReference type="InterPro" id="IPR010282">
    <property type="entry name" value="Uncharacterised_HutD/Ves"/>
</dbReference>
<dbReference type="InterPro" id="IPR023482">
    <property type="entry name" value="Uncharacterised_Ves"/>
</dbReference>
<dbReference type="NCBIfam" id="NF008488">
    <property type="entry name" value="PRK11396.1"/>
    <property type="match status" value="1"/>
</dbReference>
<dbReference type="PANTHER" id="PTHR37943">
    <property type="entry name" value="PROTEIN VES"/>
    <property type="match status" value="1"/>
</dbReference>
<dbReference type="PANTHER" id="PTHR37943:SF1">
    <property type="entry name" value="PROTEIN VES"/>
    <property type="match status" value="1"/>
</dbReference>
<dbReference type="Pfam" id="PF05962">
    <property type="entry name" value="HutD"/>
    <property type="match status" value="1"/>
</dbReference>
<dbReference type="SUPFAM" id="SSF51182">
    <property type="entry name" value="RmlC-like cupins"/>
    <property type="match status" value="1"/>
</dbReference>
<gene>
    <name evidence="1" type="primary">ves</name>
    <name type="ordered locus">ECSE_1912</name>
</gene>
<sequence length="191" mass="21577">MEYFDMRKMSVNLWRNAAGETREICTFPPAKRDFYWRASIASIAANGEFSLFPGMERIVTLLEGGEMFLESADRFNHTLKPLQPFAFAADQVVKAKLTAGQMSMDFNIMTRLDVCKAKVRIAERTFTTFGSRGGVVFVINGAWQLGDKLLTTDQGACWFDGRHTLRLLQPQGKLLFSEINWLAGHSPDQVQ</sequence>
<accession>B6IBG2</accession>
<proteinExistence type="inferred from homology"/>
<comment type="similarity">
    <text evidence="1">Belongs to the Ves family.</text>
</comment>
<comment type="sequence caution" evidence="2">
    <conflict type="erroneous initiation">
        <sequence resource="EMBL-CDS" id="BAG77436"/>
    </conflict>
</comment>